<sequence>MTDNSKIRVVVGMSGGVDSSVTALLLKEQGYDVIGVFMKNWDDTDEFGVCTATEDYKDVAAVADQIGIPYYSVNFEKEYWDRVFEYFLAEYRAGRTPNPDVMCNKEIKFKAFLDYAMTLGADYVATGHYAQVKRDENGTVHMLRGADNGKDQTYFLSQLSQEQLQKTLFPLGHLQKSEVREIAERAGLATAKKKDSTGICFIGEKNFKQFLSQYLPAQKGRMMTIDGRDMGEHAGLMYYTIGQRGGLGIGGQHGGDNQPWFVVGKDLSQNILYVGQGFYHEALMSNSLDASVIHFTREMPEEFTFECTAKFRYRQPDSQVTVHVRGDKAEVVFAEPQRAITPGQAVVFYDGKECLGGGMIDMAYKNGQPCQYI</sequence>
<proteinExistence type="inferred from homology"/>
<accession>Q5X9C1</accession>
<evidence type="ECO:0000255" key="1">
    <source>
        <dbReference type="HAMAP-Rule" id="MF_00144"/>
    </source>
</evidence>
<evidence type="ECO:0000305" key="2"/>
<keyword id="KW-0067">ATP-binding</keyword>
<keyword id="KW-0963">Cytoplasm</keyword>
<keyword id="KW-1015">Disulfide bond</keyword>
<keyword id="KW-0547">Nucleotide-binding</keyword>
<keyword id="KW-0694">RNA-binding</keyword>
<keyword id="KW-0808">Transferase</keyword>
<keyword id="KW-0819">tRNA processing</keyword>
<keyword id="KW-0820">tRNA-binding</keyword>
<dbReference type="EC" id="2.8.1.13" evidence="1"/>
<dbReference type="EMBL" id="CP000003">
    <property type="protein sequence ID" value="AAT87992.1"/>
    <property type="status" value="ALT_INIT"/>
    <property type="molecule type" value="Genomic_DNA"/>
</dbReference>
<dbReference type="RefSeq" id="WP_011889253.1">
    <property type="nucleotide sequence ID" value="NC_006086.1"/>
</dbReference>
<dbReference type="SMR" id="Q5X9C1"/>
<dbReference type="KEGG" id="spa:M6_Spy1857"/>
<dbReference type="HOGENOM" id="CLU_035188_1_0_9"/>
<dbReference type="Proteomes" id="UP000001167">
    <property type="component" value="Chromosome"/>
</dbReference>
<dbReference type="GO" id="GO:0005737">
    <property type="term" value="C:cytoplasm"/>
    <property type="evidence" value="ECO:0007669"/>
    <property type="project" value="UniProtKB-SubCell"/>
</dbReference>
<dbReference type="GO" id="GO:0005524">
    <property type="term" value="F:ATP binding"/>
    <property type="evidence" value="ECO:0007669"/>
    <property type="project" value="UniProtKB-KW"/>
</dbReference>
<dbReference type="GO" id="GO:0000049">
    <property type="term" value="F:tRNA binding"/>
    <property type="evidence" value="ECO:0007669"/>
    <property type="project" value="UniProtKB-KW"/>
</dbReference>
<dbReference type="GO" id="GO:0103016">
    <property type="term" value="F:tRNA-uridine 2-sulfurtransferase activity"/>
    <property type="evidence" value="ECO:0007669"/>
    <property type="project" value="UniProtKB-EC"/>
</dbReference>
<dbReference type="GO" id="GO:0002143">
    <property type="term" value="P:tRNA wobble position uridine thiolation"/>
    <property type="evidence" value="ECO:0007669"/>
    <property type="project" value="TreeGrafter"/>
</dbReference>
<dbReference type="CDD" id="cd01998">
    <property type="entry name" value="MnmA_TRMU-like"/>
    <property type="match status" value="1"/>
</dbReference>
<dbReference type="FunFam" id="2.30.30.280:FF:000001">
    <property type="entry name" value="tRNA-specific 2-thiouridylase MnmA"/>
    <property type="match status" value="1"/>
</dbReference>
<dbReference type="FunFam" id="2.40.30.10:FF:000023">
    <property type="entry name" value="tRNA-specific 2-thiouridylase MnmA"/>
    <property type="match status" value="1"/>
</dbReference>
<dbReference type="FunFam" id="3.40.50.620:FF:000004">
    <property type="entry name" value="tRNA-specific 2-thiouridylase MnmA"/>
    <property type="match status" value="1"/>
</dbReference>
<dbReference type="Gene3D" id="2.30.30.280">
    <property type="entry name" value="Adenine nucleotide alpha hydrolases-like domains"/>
    <property type="match status" value="1"/>
</dbReference>
<dbReference type="Gene3D" id="3.40.50.620">
    <property type="entry name" value="HUPs"/>
    <property type="match status" value="1"/>
</dbReference>
<dbReference type="Gene3D" id="2.40.30.10">
    <property type="entry name" value="Translation factors"/>
    <property type="match status" value="1"/>
</dbReference>
<dbReference type="HAMAP" id="MF_00144">
    <property type="entry name" value="tRNA_thiouridyl_MnmA"/>
    <property type="match status" value="1"/>
</dbReference>
<dbReference type="InterPro" id="IPR004506">
    <property type="entry name" value="MnmA-like"/>
</dbReference>
<dbReference type="InterPro" id="IPR046885">
    <property type="entry name" value="MnmA-like_C"/>
</dbReference>
<dbReference type="InterPro" id="IPR046884">
    <property type="entry name" value="MnmA-like_central"/>
</dbReference>
<dbReference type="InterPro" id="IPR023382">
    <property type="entry name" value="MnmA-like_central_sf"/>
</dbReference>
<dbReference type="InterPro" id="IPR014729">
    <property type="entry name" value="Rossmann-like_a/b/a_fold"/>
</dbReference>
<dbReference type="NCBIfam" id="NF001138">
    <property type="entry name" value="PRK00143.1"/>
    <property type="match status" value="1"/>
</dbReference>
<dbReference type="NCBIfam" id="TIGR00420">
    <property type="entry name" value="trmU"/>
    <property type="match status" value="1"/>
</dbReference>
<dbReference type="PANTHER" id="PTHR11933:SF5">
    <property type="entry name" value="MITOCHONDRIAL TRNA-SPECIFIC 2-THIOURIDYLASE 1"/>
    <property type="match status" value="1"/>
</dbReference>
<dbReference type="PANTHER" id="PTHR11933">
    <property type="entry name" value="TRNA 5-METHYLAMINOMETHYL-2-THIOURIDYLATE -METHYLTRANSFERASE"/>
    <property type="match status" value="1"/>
</dbReference>
<dbReference type="Pfam" id="PF03054">
    <property type="entry name" value="tRNA_Me_trans"/>
    <property type="match status" value="1"/>
</dbReference>
<dbReference type="Pfam" id="PF20258">
    <property type="entry name" value="tRNA_Me_trans_C"/>
    <property type="match status" value="1"/>
</dbReference>
<dbReference type="Pfam" id="PF20259">
    <property type="entry name" value="tRNA_Me_trans_M"/>
    <property type="match status" value="1"/>
</dbReference>
<dbReference type="SUPFAM" id="SSF52402">
    <property type="entry name" value="Adenine nucleotide alpha hydrolases-like"/>
    <property type="match status" value="1"/>
</dbReference>
<organism>
    <name type="scientific">Streptococcus pyogenes serotype M6 (strain ATCC BAA-946 / MGAS10394)</name>
    <dbReference type="NCBI Taxonomy" id="286636"/>
    <lineage>
        <taxon>Bacteria</taxon>
        <taxon>Bacillati</taxon>
        <taxon>Bacillota</taxon>
        <taxon>Bacilli</taxon>
        <taxon>Lactobacillales</taxon>
        <taxon>Streptococcaceae</taxon>
        <taxon>Streptococcus</taxon>
    </lineage>
</organism>
<gene>
    <name evidence="1" type="primary">mnmA</name>
    <name type="synonym">trmU</name>
    <name type="ordered locus">M6_Spy1857</name>
</gene>
<name>MNMA_STRP6</name>
<protein>
    <recommendedName>
        <fullName evidence="1">tRNA-specific 2-thiouridylase MnmA</fullName>
        <ecNumber evidence="1">2.8.1.13</ecNumber>
    </recommendedName>
</protein>
<comment type="function">
    <text evidence="1">Catalyzes the 2-thiolation of uridine at the wobble position (U34) of tRNA, leading to the formation of s(2)U34.</text>
</comment>
<comment type="catalytic activity">
    <reaction evidence="1">
        <text>S-sulfanyl-L-cysteinyl-[protein] + uridine(34) in tRNA + AH2 + ATP = 2-thiouridine(34) in tRNA + L-cysteinyl-[protein] + A + AMP + diphosphate + H(+)</text>
        <dbReference type="Rhea" id="RHEA:47032"/>
        <dbReference type="Rhea" id="RHEA-COMP:10131"/>
        <dbReference type="Rhea" id="RHEA-COMP:11726"/>
        <dbReference type="Rhea" id="RHEA-COMP:11727"/>
        <dbReference type="Rhea" id="RHEA-COMP:11728"/>
        <dbReference type="ChEBI" id="CHEBI:13193"/>
        <dbReference type="ChEBI" id="CHEBI:15378"/>
        <dbReference type="ChEBI" id="CHEBI:17499"/>
        <dbReference type="ChEBI" id="CHEBI:29950"/>
        <dbReference type="ChEBI" id="CHEBI:30616"/>
        <dbReference type="ChEBI" id="CHEBI:33019"/>
        <dbReference type="ChEBI" id="CHEBI:61963"/>
        <dbReference type="ChEBI" id="CHEBI:65315"/>
        <dbReference type="ChEBI" id="CHEBI:87170"/>
        <dbReference type="ChEBI" id="CHEBI:456215"/>
        <dbReference type="EC" id="2.8.1.13"/>
    </reaction>
</comment>
<comment type="subcellular location">
    <subcellularLocation>
        <location evidence="1">Cytoplasm</location>
    </subcellularLocation>
</comment>
<comment type="similarity">
    <text evidence="1">Belongs to the MnmA/TRMU family.</text>
</comment>
<comment type="sequence caution" evidence="2">
    <conflict type="erroneous initiation">
        <sequence resource="EMBL-CDS" id="AAT87992"/>
    </conflict>
</comment>
<feature type="chain" id="PRO_0000121689" description="tRNA-specific 2-thiouridylase MnmA">
    <location>
        <begin position="1"/>
        <end position="373"/>
    </location>
</feature>
<feature type="region of interest" description="Interaction with target base in tRNA" evidence="1">
    <location>
        <begin position="98"/>
        <end position="100"/>
    </location>
</feature>
<feature type="region of interest" description="Interaction with tRNA" evidence="1">
    <location>
        <begin position="150"/>
        <end position="152"/>
    </location>
</feature>
<feature type="region of interest" description="Interaction with tRNA" evidence="1">
    <location>
        <begin position="312"/>
        <end position="313"/>
    </location>
</feature>
<feature type="active site" description="Nucleophile" evidence="1">
    <location>
        <position position="103"/>
    </location>
</feature>
<feature type="active site" description="Cysteine persulfide intermediate" evidence="1">
    <location>
        <position position="200"/>
    </location>
</feature>
<feature type="binding site" evidence="1">
    <location>
        <begin position="12"/>
        <end position="19"/>
    </location>
    <ligand>
        <name>ATP</name>
        <dbReference type="ChEBI" id="CHEBI:30616"/>
    </ligand>
</feature>
<feature type="binding site" evidence="1">
    <location>
        <position position="38"/>
    </location>
    <ligand>
        <name>ATP</name>
        <dbReference type="ChEBI" id="CHEBI:30616"/>
    </ligand>
</feature>
<feature type="binding site" evidence="1">
    <location>
        <position position="127"/>
    </location>
    <ligand>
        <name>ATP</name>
        <dbReference type="ChEBI" id="CHEBI:30616"/>
    </ligand>
</feature>
<feature type="site" description="Interaction with tRNA" evidence="1">
    <location>
        <position position="128"/>
    </location>
</feature>
<feature type="site" description="Interaction with tRNA" evidence="1">
    <location>
        <position position="344"/>
    </location>
</feature>
<feature type="disulfide bond" description="Alternate" evidence="1">
    <location>
        <begin position="103"/>
        <end position="200"/>
    </location>
</feature>
<reference key="1">
    <citation type="journal article" date="2004" name="J. Infect. Dis.">
        <title>Progress toward characterization of the group A Streptococcus metagenome: complete genome sequence of a macrolide-resistant serotype M6 strain.</title>
        <authorList>
            <person name="Banks D.J."/>
            <person name="Porcella S.F."/>
            <person name="Barbian K.D."/>
            <person name="Beres S.B."/>
            <person name="Philips L.E."/>
            <person name="Voyich J.M."/>
            <person name="DeLeo F.R."/>
            <person name="Martin J.M."/>
            <person name="Somerville G.A."/>
            <person name="Musser J.M."/>
        </authorList>
    </citation>
    <scope>NUCLEOTIDE SEQUENCE [LARGE SCALE GENOMIC DNA]</scope>
    <source>
        <strain>ATCC BAA-946 / MGAS10394</strain>
    </source>
</reference>